<sequence length="146" mass="16195">MKKVLLVNGPNLNRLGVREVNVYGKGTLATLEADMKQEAETMGVELECFQSNHEGAIIDRIHEAEDIYEGIILNPGAFTHYSYAIRDAIASISIPVIEVHISNIHQRESFRHESVTAAVCAGQIVGFGFYGYKLALFALMEKLREA</sequence>
<gene>
    <name evidence="1" type="primary">aroQ</name>
    <name type="ordered locus">BCE_4272</name>
</gene>
<accession>Q730Z4</accession>
<feature type="chain" id="PRO_0000159868" description="3-dehydroquinate dehydratase">
    <location>
        <begin position="1"/>
        <end position="146"/>
    </location>
</feature>
<feature type="active site" description="Proton acceptor" evidence="1">
    <location>
        <position position="23"/>
    </location>
</feature>
<feature type="active site" description="Proton donor" evidence="1">
    <location>
        <position position="100"/>
    </location>
</feature>
<feature type="binding site" evidence="1">
    <location>
        <position position="74"/>
    </location>
    <ligand>
        <name>substrate</name>
    </ligand>
</feature>
<feature type="binding site" evidence="1">
    <location>
        <position position="80"/>
    </location>
    <ligand>
        <name>substrate</name>
    </ligand>
</feature>
<feature type="binding site" evidence="1">
    <location>
        <position position="87"/>
    </location>
    <ligand>
        <name>substrate</name>
    </ligand>
</feature>
<feature type="binding site" evidence="1">
    <location>
        <begin position="101"/>
        <end position="102"/>
    </location>
    <ligand>
        <name>substrate</name>
    </ligand>
</feature>
<feature type="binding site" evidence="1">
    <location>
        <position position="111"/>
    </location>
    <ligand>
        <name>substrate</name>
    </ligand>
</feature>
<feature type="site" description="Transition state stabilizer" evidence="1">
    <location>
        <position position="18"/>
    </location>
</feature>
<comment type="function">
    <text evidence="1">Catalyzes a trans-dehydration via an enolate intermediate.</text>
</comment>
<comment type="catalytic activity">
    <reaction evidence="1">
        <text>3-dehydroquinate = 3-dehydroshikimate + H2O</text>
        <dbReference type="Rhea" id="RHEA:21096"/>
        <dbReference type="ChEBI" id="CHEBI:15377"/>
        <dbReference type="ChEBI" id="CHEBI:16630"/>
        <dbReference type="ChEBI" id="CHEBI:32364"/>
        <dbReference type="EC" id="4.2.1.10"/>
    </reaction>
</comment>
<comment type="pathway">
    <text evidence="1">Metabolic intermediate biosynthesis; chorismate biosynthesis; chorismate from D-erythrose 4-phosphate and phosphoenolpyruvate: step 3/7.</text>
</comment>
<comment type="subunit">
    <text evidence="1">Homododecamer.</text>
</comment>
<comment type="similarity">
    <text evidence="1">Belongs to the type-II 3-dehydroquinase family.</text>
</comment>
<organism>
    <name type="scientific">Bacillus cereus (strain ATCC 10987 / NRS 248)</name>
    <dbReference type="NCBI Taxonomy" id="222523"/>
    <lineage>
        <taxon>Bacteria</taxon>
        <taxon>Bacillati</taxon>
        <taxon>Bacillota</taxon>
        <taxon>Bacilli</taxon>
        <taxon>Bacillales</taxon>
        <taxon>Bacillaceae</taxon>
        <taxon>Bacillus</taxon>
        <taxon>Bacillus cereus group</taxon>
    </lineage>
</organism>
<keyword id="KW-0028">Amino-acid biosynthesis</keyword>
<keyword id="KW-0057">Aromatic amino acid biosynthesis</keyword>
<keyword id="KW-0456">Lyase</keyword>
<dbReference type="EC" id="4.2.1.10" evidence="1"/>
<dbReference type="EMBL" id="AE017194">
    <property type="protein sequence ID" value="AAS43173.1"/>
    <property type="molecule type" value="Genomic_DNA"/>
</dbReference>
<dbReference type="SMR" id="Q730Z4"/>
<dbReference type="KEGG" id="bca:BCE_4272"/>
<dbReference type="HOGENOM" id="CLU_090968_3_0_9"/>
<dbReference type="UniPathway" id="UPA00053">
    <property type="reaction ID" value="UER00086"/>
</dbReference>
<dbReference type="Proteomes" id="UP000002527">
    <property type="component" value="Chromosome"/>
</dbReference>
<dbReference type="GO" id="GO:0003855">
    <property type="term" value="F:3-dehydroquinate dehydratase activity"/>
    <property type="evidence" value="ECO:0007669"/>
    <property type="project" value="UniProtKB-UniRule"/>
</dbReference>
<dbReference type="GO" id="GO:0008652">
    <property type="term" value="P:amino acid biosynthetic process"/>
    <property type="evidence" value="ECO:0007669"/>
    <property type="project" value="UniProtKB-KW"/>
</dbReference>
<dbReference type="GO" id="GO:0009073">
    <property type="term" value="P:aromatic amino acid family biosynthetic process"/>
    <property type="evidence" value="ECO:0007669"/>
    <property type="project" value="UniProtKB-KW"/>
</dbReference>
<dbReference type="GO" id="GO:0009423">
    <property type="term" value="P:chorismate biosynthetic process"/>
    <property type="evidence" value="ECO:0007669"/>
    <property type="project" value="UniProtKB-UniRule"/>
</dbReference>
<dbReference type="GO" id="GO:0019631">
    <property type="term" value="P:quinate catabolic process"/>
    <property type="evidence" value="ECO:0007669"/>
    <property type="project" value="TreeGrafter"/>
</dbReference>
<dbReference type="CDD" id="cd00466">
    <property type="entry name" value="DHQase_II"/>
    <property type="match status" value="1"/>
</dbReference>
<dbReference type="Gene3D" id="3.40.50.9100">
    <property type="entry name" value="Dehydroquinase, class II"/>
    <property type="match status" value="1"/>
</dbReference>
<dbReference type="HAMAP" id="MF_00169">
    <property type="entry name" value="AroQ"/>
    <property type="match status" value="1"/>
</dbReference>
<dbReference type="InterPro" id="IPR001874">
    <property type="entry name" value="DHquinase_II"/>
</dbReference>
<dbReference type="InterPro" id="IPR018509">
    <property type="entry name" value="DHquinase_II_CS"/>
</dbReference>
<dbReference type="InterPro" id="IPR036441">
    <property type="entry name" value="DHquinase_II_sf"/>
</dbReference>
<dbReference type="NCBIfam" id="TIGR01088">
    <property type="entry name" value="aroQ"/>
    <property type="match status" value="1"/>
</dbReference>
<dbReference type="NCBIfam" id="NF003805">
    <property type="entry name" value="PRK05395.1-2"/>
    <property type="match status" value="1"/>
</dbReference>
<dbReference type="NCBIfam" id="NF003806">
    <property type="entry name" value="PRK05395.1-3"/>
    <property type="match status" value="1"/>
</dbReference>
<dbReference type="NCBIfam" id="NF003807">
    <property type="entry name" value="PRK05395.1-4"/>
    <property type="match status" value="1"/>
</dbReference>
<dbReference type="PANTHER" id="PTHR21272">
    <property type="entry name" value="CATABOLIC 3-DEHYDROQUINASE"/>
    <property type="match status" value="1"/>
</dbReference>
<dbReference type="PANTHER" id="PTHR21272:SF3">
    <property type="entry name" value="CATABOLIC 3-DEHYDROQUINASE"/>
    <property type="match status" value="1"/>
</dbReference>
<dbReference type="Pfam" id="PF01220">
    <property type="entry name" value="DHquinase_II"/>
    <property type="match status" value="1"/>
</dbReference>
<dbReference type="PIRSF" id="PIRSF001399">
    <property type="entry name" value="DHquinase_II"/>
    <property type="match status" value="1"/>
</dbReference>
<dbReference type="SUPFAM" id="SSF52304">
    <property type="entry name" value="Type II 3-dehydroquinate dehydratase"/>
    <property type="match status" value="1"/>
</dbReference>
<dbReference type="PROSITE" id="PS01029">
    <property type="entry name" value="DEHYDROQUINASE_II"/>
    <property type="match status" value="1"/>
</dbReference>
<protein>
    <recommendedName>
        <fullName evidence="1">3-dehydroquinate dehydratase</fullName>
        <shortName evidence="1">3-dehydroquinase</shortName>
        <ecNumber evidence="1">4.2.1.10</ecNumber>
    </recommendedName>
    <alternativeName>
        <fullName evidence="1">Type II DHQase</fullName>
    </alternativeName>
</protein>
<name>AROQ_BACC1</name>
<evidence type="ECO:0000255" key="1">
    <source>
        <dbReference type="HAMAP-Rule" id="MF_00169"/>
    </source>
</evidence>
<reference key="1">
    <citation type="journal article" date="2004" name="Nucleic Acids Res.">
        <title>The genome sequence of Bacillus cereus ATCC 10987 reveals metabolic adaptations and a large plasmid related to Bacillus anthracis pXO1.</title>
        <authorList>
            <person name="Rasko D.A."/>
            <person name="Ravel J."/>
            <person name="Oekstad O.A."/>
            <person name="Helgason E."/>
            <person name="Cer R.Z."/>
            <person name="Jiang L."/>
            <person name="Shores K.A."/>
            <person name="Fouts D.E."/>
            <person name="Tourasse N.J."/>
            <person name="Angiuoli S.V."/>
            <person name="Kolonay J.F."/>
            <person name="Nelson W.C."/>
            <person name="Kolstoe A.-B."/>
            <person name="Fraser C.M."/>
            <person name="Read T.D."/>
        </authorList>
    </citation>
    <scope>NUCLEOTIDE SEQUENCE [LARGE SCALE GENOMIC DNA]</scope>
    <source>
        <strain>ATCC 10987 / NRS 248</strain>
    </source>
</reference>
<proteinExistence type="inferred from homology"/>